<accession>A9AGN3</accession>
<reference key="1">
    <citation type="submission" date="2007-10" db="EMBL/GenBank/DDBJ databases">
        <title>Complete sequence of chromosome 1 of Burkholderia multivorans ATCC 17616.</title>
        <authorList>
            <person name="Copeland A."/>
            <person name="Lucas S."/>
            <person name="Lapidus A."/>
            <person name="Barry K."/>
            <person name="Glavina del Rio T."/>
            <person name="Dalin E."/>
            <person name="Tice H."/>
            <person name="Pitluck S."/>
            <person name="Chain P."/>
            <person name="Malfatti S."/>
            <person name="Shin M."/>
            <person name="Vergez L."/>
            <person name="Schmutz J."/>
            <person name="Larimer F."/>
            <person name="Land M."/>
            <person name="Hauser L."/>
            <person name="Kyrpides N."/>
            <person name="Kim E."/>
            <person name="Tiedje J."/>
            <person name="Richardson P."/>
        </authorList>
    </citation>
    <scope>NUCLEOTIDE SEQUENCE [LARGE SCALE GENOMIC DNA]</scope>
    <source>
        <strain>ATCC 17616 / 249</strain>
    </source>
</reference>
<reference key="2">
    <citation type="submission" date="2007-04" db="EMBL/GenBank/DDBJ databases">
        <title>Complete genome sequence of Burkholderia multivorans ATCC 17616.</title>
        <authorList>
            <person name="Ohtsubo Y."/>
            <person name="Yamashita A."/>
            <person name="Kurokawa K."/>
            <person name="Takami H."/>
            <person name="Yuhara S."/>
            <person name="Nishiyama E."/>
            <person name="Endo R."/>
            <person name="Miyazaki R."/>
            <person name="Ono A."/>
            <person name="Yano K."/>
            <person name="Ito M."/>
            <person name="Sota M."/>
            <person name="Yuji N."/>
            <person name="Hattori M."/>
            <person name="Tsuda M."/>
        </authorList>
    </citation>
    <scope>NUCLEOTIDE SEQUENCE [LARGE SCALE GENOMIC DNA]</scope>
    <source>
        <strain>ATCC 17616 / 249</strain>
    </source>
</reference>
<evidence type="ECO:0000255" key="1">
    <source>
        <dbReference type="HAMAP-Rule" id="MF_00116"/>
    </source>
</evidence>
<proteinExistence type="inferred from homology"/>
<protein>
    <recommendedName>
        <fullName evidence="1">Deoxyuridine 5'-triphosphate nucleotidohydrolase</fullName>
        <shortName evidence="1">dUTPase</shortName>
        <ecNumber evidence="1">3.6.1.23</ecNumber>
    </recommendedName>
    <alternativeName>
        <fullName evidence="1">dUTP pyrophosphatase</fullName>
    </alternativeName>
</protein>
<comment type="function">
    <text evidence="1">This enzyme is involved in nucleotide metabolism: it produces dUMP, the immediate precursor of thymidine nucleotides and it decreases the intracellular concentration of dUTP so that uracil cannot be incorporated into DNA.</text>
</comment>
<comment type="catalytic activity">
    <reaction evidence="1">
        <text>dUTP + H2O = dUMP + diphosphate + H(+)</text>
        <dbReference type="Rhea" id="RHEA:10248"/>
        <dbReference type="ChEBI" id="CHEBI:15377"/>
        <dbReference type="ChEBI" id="CHEBI:15378"/>
        <dbReference type="ChEBI" id="CHEBI:33019"/>
        <dbReference type="ChEBI" id="CHEBI:61555"/>
        <dbReference type="ChEBI" id="CHEBI:246422"/>
        <dbReference type="EC" id="3.6.1.23"/>
    </reaction>
</comment>
<comment type="cofactor">
    <cofactor evidence="1">
        <name>Mg(2+)</name>
        <dbReference type="ChEBI" id="CHEBI:18420"/>
    </cofactor>
</comment>
<comment type="pathway">
    <text evidence="1">Pyrimidine metabolism; dUMP biosynthesis; dUMP from dCTP (dUTP route): step 2/2.</text>
</comment>
<comment type="similarity">
    <text evidence="1">Belongs to the dUTPase family.</text>
</comment>
<keyword id="KW-0378">Hydrolase</keyword>
<keyword id="KW-0460">Magnesium</keyword>
<keyword id="KW-0479">Metal-binding</keyword>
<keyword id="KW-0546">Nucleotide metabolism</keyword>
<keyword id="KW-1185">Reference proteome</keyword>
<organism>
    <name type="scientific">Burkholderia multivorans (strain ATCC 17616 / 249)</name>
    <dbReference type="NCBI Taxonomy" id="395019"/>
    <lineage>
        <taxon>Bacteria</taxon>
        <taxon>Pseudomonadati</taxon>
        <taxon>Pseudomonadota</taxon>
        <taxon>Betaproteobacteria</taxon>
        <taxon>Burkholderiales</taxon>
        <taxon>Burkholderiaceae</taxon>
        <taxon>Burkholderia</taxon>
        <taxon>Burkholderia cepacia complex</taxon>
    </lineage>
</organism>
<feature type="chain" id="PRO_1000094947" description="Deoxyuridine 5'-triphosphate nucleotidohydrolase">
    <location>
        <begin position="1"/>
        <end position="148"/>
    </location>
</feature>
<feature type="binding site" evidence="1">
    <location>
        <begin position="67"/>
        <end position="69"/>
    </location>
    <ligand>
        <name>substrate</name>
    </ligand>
</feature>
<feature type="binding site" evidence="1">
    <location>
        <position position="80"/>
    </location>
    <ligand>
        <name>substrate</name>
    </ligand>
</feature>
<feature type="binding site" evidence="1">
    <location>
        <begin position="84"/>
        <end position="86"/>
    </location>
    <ligand>
        <name>substrate</name>
    </ligand>
</feature>
<feature type="binding site" evidence="1">
    <location>
        <position position="94"/>
    </location>
    <ligand>
        <name>substrate</name>
    </ligand>
</feature>
<name>DUT_BURM1</name>
<dbReference type="EC" id="3.6.1.23" evidence="1"/>
<dbReference type="EMBL" id="CP000868">
    <property type="protein sequence ID" value="ABX14475.1"/>
    <property type="molecule type" value="Genomic_DNA"/>
</dbReference>
<dbReference type="EMBL" id="AP009385">
    <property type="protein sequence ID" value="BAG44371.1"/>
    <property type="molecule type" value="Genomic_DNA"/>
</dbReference>
<dbReference type="RefSeq" id="WP_006398532.1">
    <property type="nucleotide sequence ID" value="NC_010804.1"/>
</dbReference>
<dbReference type="SMR" id="A9AGN3"/>
<dbReference type="STRING" id="395019.BMULJ_02480"/>
<dbReference type="GeneID" id="89571061"/>
<dbReference type="KEGG" id="bmj:BMULJ_02480"/>
<dbReference type="KEGG" id="bmu:Bmul_0780"/>
<dbReference type="eggNOG" id="COG0756">
    <property type="taxonomic scope" value="Bacteria"/>
</dbReference>
<dbReference type="HOGENOM" id="CLU_068508_1_1_4"/>
<dbReference type="UniPathway" id="UPA00610">
    <property type="reaction ID" value="UER00666"/>
</dbReference>
<dbReference type="Proteomes" id="UP000008815">
    <property type="component" value="Chromosome 1"/>
</dbReference>
<dbReference type="GO" id="GO:0004170">
    <property type="term" value="F:dUTP diphosphatase activity"/>
    <property type="evidence" value="ECO:0007669"/>
    <property type="project" value="UniProtKB-UniRule"/>
</dbReference>
<dbReference type="GO" id="GO:0000287">
    <property type="term" value="F:magnesium ion binding"/>
    <property type="evidence" value="ECO:0007669"/>
    <property type="project" value="UniProtKB-UniRule"/>
</dbReference>
<dbReference type="GO" id="GO:0006226">
    <property type="term" value="P:dUMP biosynthetic process"/>
    <property type="evidence" value="ECO:0007669"/>
    <property type="project" value="UniProtKB-UniRule"/>
</dbReference>
<dbReference type="GO" id="GO:0046081">
    <property type="term" value="P:dUTP catabolic process"/>
    <property type="evidence" value="ECO:0007669"/>
    <property type="project" value="InterPro"/>
</dbReference>
<dbReference type="CDD" id="cd07557">
    <property type="entry name" value="trimeric_dUTPase"/>
    <property type="match status" value="1"/>
</dbReference>
<dbReference type="FunFam" id="2.70.40.10:FF:000002">
    <property type="entry name" value="dUTP diphosphatase"/>
    <property type="match status" value="1"/>
</dbReference>
<dbReference type="Gene3D" id="2.70.40.10">
    <property type="match status" value="1"/>
</dbReference>
<dbReference type="HAMAP" id="MF_00116">
    <property type="entry name" value="dUTPase_bact"/>
    <property type="match status" value="1"/>
</dbReference>
<dbReference type="InterPro" id="IPR008181">
    <property type="entry name" value="dUTPase"/>
</dbReference>
<dbReference type="InterPro" id="IPR029054">
    <property type="entry name" value="dUTPase-like"/>
</dbReference>
<dbReference type="InterPro" id="IPR036157">
    <property type="entry name" value="dUTPase-like_sf"/>
</dbReference>
<dbReference type="InterPro" id="IPR033704">
    <property type="entry name" value="dUTPase_trimeric"/>
</dbReference>
<dbReference type="NCBIfam" id="TIGR00576">
    <property type="entry name" value="dut"/>
    <property type="match status" value="1"/>
</dbReference>
<dbReference type="NCBIfam" id="NF001862">
    <property type="entry name" value="PRK00601.1"/>
    <property type="match status" value="1"/>
</dbReference>
<dbReference type="PANTHER" id="PTHR11241">
    <property type="entry name" value="DEOXYURIDINE 5'-TRIPHOSPHATE NUCLEOTIDOHYDROLASE"/>
    <property type="match status" value="1"/>
</dbReference>
<dbReference type="PANTHER" id="PTHR11241:SF0">
    <property type="entry name" value="DEOXYURIDINE 5'-TRIPHOSPHATE NUCLEOTIDOHYDROLASE"/>
    <property type="match status" value="1"/>
</dbReference>
<dbReference type="Pfam" id="PF00692">
    <property type="entry name" value="dUTPase"/>
    <property type="match status" value="1"/>
</dbReference>
<dbReference type="SUPFAM" id="SSF51283">
    <property type="entry name" value="dUTPase-like"/>
    <property type="match status" value="1"/>
</dbReference>
<sequence length="148" mass="15851">MKLDLKILDARMRDYLPAYATAGSAGLDLRACLDAPLTLKPGDTALVPTGLAIHLADPNYAALILPRSGLGHKHGIVLGNLVGLIDSDYQGQLMVSTWNRGQTEFVLNPFERLAQLVIVPVVQAQFNIVDDFAQSERGAGGFGSTGRH</sequence>
<gene>
    <name evidence="1" type="primary">dut</name>
    <name type="ordered locus">Bmul_0780</name>
    <name type="ordered locus">BMULJ_02480</name>
</gene>